<proteinExistence type="inferred from homology"/>
<name>Y665_CHLTR</name>
<keyword id="KW-1185">Reference proteome</keyword>
<protein>
    <recommendedName>
        <fullName>Uncharacterized protein CT_665</fullName>
    </recommendedName>
</protein>
<comment type="similarity">
    <text evidence="1">Belongs to the chlamydial CPn_0711/CT_665/TC_0036 family.</text>
</comment>
<organism>
    <name type="scientific">Chlamydia trachomatis serovar D (strain ATCC VR-885 / DSM 19411 / UW-3/Cx)</name>
    <dbReference type="NCBI Taxonomy" id="272561"/>
    <lineage>
        <taxon>Bacteria</taxon>
        <taxon>Pseudomonadati</taxon>
        <taxon>Chlamydiota</taxon>
        <taxon>Chlamydiia</taxon>
        <taxon>Chlamydiales</taxon>
        <taxon>Chlamydiaceae</taxon>
        <taxon>Chlamydia/Chlamydophila group</taxon>
        <taxon>Chlamydia</taxon>
    </lineage>
</organism>
<reference key="1">
    <citation type="journal article" date="1998" name="Science">
        <title>Genome sequence of an obligate intracellular pathogen of humans: Chlamydia trachomatis.</title>
        <authorList>
            <person name="Stephens R.S."/>
            <person name="Kalman S."/>
            <person name="Lammel C.J."/>
            <person name="Fan J."/>
            <person name="Marathe R."/>
            <person name="Aravind L."/>
            <person name="Mitchell W.P."/>
            <person name="Olinger L."/>
            <person name="Tatusov R.L."/>
            <person name="Zhao Q."/>
            <person name="Koonin E.V."/>
            <person name="Davis R.W."/>
        </authorList>
    </citation>
    <scope>NUCLEOTIDE SEQUENCE [LARGE SCALE GENOMIC DNA]</scope>
    <source>
        <strain>ATCC VR-885 / DSM 19411 / UW-3/Cx</strain>
    </source>
</reference>
<gene>
    <name type="ordered locus">CT_665</name>
</gene>
<accession>O84672</accession>
<dbReference type="EMBL" id="AE001273">
    <property type="protein sequence ID" value="AAC68260.1"/>
    <property type="molecule type" value="Genomic_DNA"/>
</dbReference>
<dbReference type="PIR" id="E71485">
    <property type="entry name" value="E71485"/>
</dbReference>
<dbReference type="RefSeq" id="NP_220184.1">
    <property type="nucleotide sequence ID" value="NC_000117.1"/>
</dbReference>
<dbReference type="SMR" id="O84672"/>
<dbReference type="IntAct" id="O84672">
    <property type="interactions" value="2"/>
</dbReference>
<dbReference type="STRING" id="272561.CT_665"/>
<dbReference type="EnsemblBacteria" id="AAC68260">
    <property type="protein sequence ID" value="AAC68260"/>
    <property type="gene ID" value="CT_665"/>
</dbReference>
<dbReference type="GeneID" id="884450"/>
<dbReference type="KEGG" id="ctr:CT_665"/>
<dbReference type="PATRIC" id="fig|272561.5.peg.732"/>
<dbReference type="HOGENOM" id="CLU_185897_0_0_0"/>
<dbReference type="InParanoid" id="O84672"/>
<dbReference type="OrthoDB" id="18174at2"/>
<dbReference type="Proteomes" id="UP000000431">
    <property type="component" value="Chromosome"/>
</dbReference>
<dbReference type="InterPro" id="IPR035336">
    <property type="entry name" value="DUF5398"/>
</dbReference>
<dbReference type="Pfam" id="PF17376">
    <property type="entry name" value="DUF5398"/>
    <property type="match status" value="1"/>
</dbReference>
<sequence length="83" mass="9296">MFNMENSAAKGEKAARQLFDLEQDMHDVTKAHEVNANVQSKVQTLTSSLREGASKESFEKQQTLLAGYVALQKVLGRINRKMV</sequence>
<evidence type="ECO:0000305" key="1"/>
<feature type="chain" id="PRO_0000218420" description="Uncharacterized protein CT_665">
    <location>
        <begin position="1"/>
        <end position="83"/>
    </location>
</feature>